<comment type="function">
    <text evidence="1">Binds medium- and long-chain acyl-CoA esters with very high affinity and may function as an intracellular carrier of acyl-CoA esters.</text>
</comment>
<comment type="similarity">
    <text evidence="4">Belongs to the ACBP family.</text>
</comment>
<evidence type="ECO:0000250" key="1"/>
<evidence type="ECO:0000255" key="2">
    <source>
        <dbReference type="PROSITE-ProRule" id="PRU00573"/>
    </source>
</evidence>
<evidence type="ECO:0000303" key="3">
    <source ref="1"/>
</evidence>
<evidence type="ECO:0000305" key="4"/>
<keyword id="KW-0446">Lipid-binding</keyword>
<keyword id="KW-0813">Transport</keyword>
<organism evidence="3">
    <name type="scientific">Hypsibius exemplaris</name>
    <name type="common">Freshwater tardigrade</name>
    <dbReference type="NCBI Taxonomy" id="2072580"/>
    <lineage>
        <taxon>Eukaryota</taxon>
        <taxon>Metazoa</taxon>
        <taxon>Ecdysozoa</taxon>
        <taxon>Tardigrada</taxon>
        <taxon>Eutardigrada</taxon>
        <taxon>Parachela</taxon>
        <taxon>Hypsibioidea</taxon>
        <taxon>Hypsibiidae</taxon>
        <taxon>Hypsibius</taxon>
    </lineage>
</organism>
<name>ACBP_HYPEX</name>
<sequence length="89" mass="10137">MSVEEQFKTSAEQVKKLKSSPSDTELLELYSLYKQATIGDVNTDRPGMLYLKEKAKWDAWNGRKGLGKEQAQELYVKKVKELVEKNGLA</sequence>
<accession>P0C8L7</accession>
<feature type="chain" id="PRO_0000357457" description="Putative acyl-CoA-binding protein">
    <location>
        <begin position="1"/>
        <end position="89"/>
    </location>
</feature>
<feature type="domain" description="ACB" evidence="2">
    <location>
        <begin position="3"/>
        <end position="88"/>
    </location>
</feature>
<feature type="binding site" evidence="1">
    <location>
        <position position="15"/>
    </location>
    <ligand>
        <name>an acyl-CoA</name>
        <dbReference type="ChEBI" id="CHEBI:58342"/>
    </ligand>
</feature>
<feature type="binding site" evidence="1">
    <location>
        <begin position="30"/>
        <end position="34"/>
    </location>
    <ligand>
        <name>an acyl-CoA</name>
        <dbReference type="ChEBI" id="CHEBI:58342"/>
    </ligand>
</feature>
<feature type="binding site" evidence="1">
    <location>
        <position position="52"/>
    </location>
    <ligand>
        <name>an acyl-CoA</name>
        <dbReference type="ChEBI" id="CHEBI:58342"/>
    </ligand>
</feature>
<feature type="binding site" evidence="1">
    <location>
        <position position="56"/>
    </location>
    <ligand>
        <name>an acyl-CoA</name>
        <dbReference type="ChEBI" id="CHEBI:58342"/>
    </ligand>
</feature>
<feature type="binding site" evidence="1">
    <location>
        <position position="75"/>
    </location>
    <ligand>
        <name>an acyl-CoA</name>
        <dbReference type="ChEBI" id="CHEBI:58342"/>
    </ligand>
</feature>
<reference key="1">
    <citation type="submission" date="2003-12" db="EMBL/GenBank/DDBJ databases">
        <title>A survey of genes expressed in the tardigrade Hypsibius dujardini.</title>
        <authorList>
            <person name="Daub J."/>
            <person name="Thomas F."/>
            <person name="Aboobaker A."/>
            <person name="Blaxter M.L."/>
        </authorList>
    </citation>
    <scope>NUCLEOTIDE SEQUENCE [LARGE SCALE MRNA]</scope>
    <source>
        <strain>Z151</strain>
    </source>
</reference>
<dbReference type="EMBL" id="CK326514">
    <property type="status" value="NOT_ANNOTATED_CDS"/>
    <property type="molecule type" value="mRNA"/>
</dbReference>
<dbReference type="SMR" id="P0C8L7"/>
<dbReference type="GO" id="GO:0000062">
    <property type="term" value="F:fatty-acyl-CoA binding"/>
    <property type="evidence" value="ECO:0007669"/>
    <property type="project" value="InterPro"/>
</dbReference>
<dbReference type="GO" id="GO:0006631">
    <property type="term" value="P:fatty acid metabolic process"/>
    <property type="evidence" value="ECO:0007669"/>
    <property type="project" value="TreeGrafter"/>
</dbReference>
<dbReference type="FunFam" id="1.20.80.10:FF:000010">
    <property type="entry name" value="Acyl-CoA-binding domain-containing protein 5"/>
    <property type="match status" value="1"/>
</dbReference>
<dbReference type="Gene3D" id="1.20.80.10">
    <property type="match status" value="1"/>
</dbReference>
<dbReference type="InterPro" id="IPR000582">
    <property type="entry name" value="Acyl-CoA-binding_protein"/>
</dbReference>
<dbReference type="InterPro" id="IPR035984">
    <property type="entry name" value="Acyl-CoA-binding_sf"/>
</dbReference>
<dbReference type="InterPro" id="IPR014352">
    <property type="entry name" value="FERM/acyl-CoA-bd_prot_sf"/>
</dbReference>
<dbReference type="PANTHER" id="PTHR23310:SF62">
    <property type="entry name" value="ACYL-COA BINDING PROTEIN 1, ISOFORM A"/>
    <property type="match status" value="1"/>
</dbReference>
<dbReference type="PANTHER" id="PTHR23310">
    <property type="entry name" value="ACYL-COA-BINDING PROTEIN, ACBP"/>
    <property type="match status" value="1"/>
</dbReference>
<dbReference type="Pfam" id="PF00887">
    <property type="entry name" value="ACBP"/>
    <property type="match status" value="1"/>
</dbReference>
<dbReference type="PRINTS" id="PR00689">
    <property type="entry name" value="ACOABINDINGP"/>
</dbReference>
<dbReference type="SUPFAM" id="SSF47027">
    <property type="entry name" value="Acyl-CoA binding protein"/>
    <property type="match status" value="1"/>
</dbReference>
<dbReference type="PROSITE" id="PS51228">
    <property type="entry name" value="ACB_2"/>
    <property type="match status" value="1"/>
</dbReference>
<protein>
    <recommendedName>
        <fullName>Putative acyl-CoA-binding protein</fullName>
        <shortName>ACBP</shortName>
    </recommendedName>
</protein>
<proteinExistence type="inferred from homology"/>